<gene>
    <name type="primary">slm1</name>
    <name type="ORF">SPAC637.13c</name>
</gene>
<accession>O94447</accession>
<evidence type="ECO:0000250" key="1">
    <source>
        <dbReference type="UniProtKB" id="P40485"/>
    </source>
</evidence>
<evidence type="ECO:0000255" key="2">
    <source>
        <dbReference type="PROSITE-ProRule" id="PRU00145"/>
    </source>
</evidence>
<evidence type="ECO:0000256" key="3">
    <source>
        <dbReference type="SAM" id="MobiDB-lite"/>
    </source>
</evidence>
<evidence type="ECO:0000269" key="4">
    <source>
    </source>
</evidence>
<evidence type="ECO:0000269" key="5">
    <source>
    </source>
</evidence>
<feature type="chain" id="PRO_0000310807" description="Cytoskeletal signaling protein slm1">
    <location>
        <begin position="1"/>
        <end position="498"/>
    </location>
</feature>
<feature type="domain" description="PH" evidence="2">
    <location>
        <begin position="300"/>
        <end position="405"/>
    </location>
</feature>
<feature type="region of interest" description="Disordered" evidence="3">
    <location>
        <begin position="1"/>
        <end position="23"/>
    </location>
</feature>
<feature type="region of interest" description="Disordered" evidence="3">
    <location>
        <begin position="416"/>
        <end position="475"/>
    </location>
</feature>
<feature type="compositionally biased region" description="Polar residues" evidence="3">
    <location>
        <begin position="441"/>
        <end position="475"/>
    </location>
</feature>
<feature type="modified residue" description="Phosphoserine" evidence="4">
    <location>
        <position position="175"/>
    </location>
</feature>
<feature type="modified residue" description="Phosphoserine" evidence="4">
    <location>
        <position position="312"/>
    </location>
</feature>
<sequence>MELSGKSEFPTRTEIPNQASNGDAVPNTDAYMGLCNSLTYRFEGWRHLVENLIAFFKQLESTSKNNAKEYMKLSKVIVHPYKDANVFEEHGIQDIFAALRDQTAAIASDSEQISIQLPGTIINILELLREDLREHCKKIAAEGTKGVKVVEKQRAETQKYLSLLDRALLPWRASSPPTVNIKNDPFIVDRQVLNCLARQVQEENNHSVAVAQLQEFSFRFEQNLIAKIKDTVKQFEGMMNQTHVKAINHLQEVVRVSEAQTLAGEWTGYAKREPEFIHGSVPPRSVDAIKYPGKNDQPTVPIMAGYLIRKTSFLKKKQRGFYAFTHSGYLYEFKSSDSLQDPEPEFALYIPDCLIGRPSEKKPKFKITGKDATKKIFGARNDYAFRASNNTELMRWWEALNTHIANVNYIQPLSNANGPSAVSDSDDDDDDPNDFRPAVERQSSTMNTRMSQPSSAVNTNRSYGSEQIPSYADSQGNSGANNNFIYNASATGHNAWNV</sequence>
<keyword id="KW-0597">Phosphoprotein</keyword>
<keyword id="KW-1185">Reference proteome</keyword>
<comment type="function">
    <text evidence="1">Effector of the TORC2- and calcineurin-signaling pathways (By similarity). Mediates actin polarization via inhibition of calcineurin-dependent transcription (By similarity). May play a role in the response to the disruption of sphingolipid synthesis, where dephosphorylation of slm1 leads to the activation and phosphorylation of ypk1 through the TORC2 and PKH1 pathways, which in turn phosphorylates orm1 and lag1 to activate sphingolipid synthesis (By similarity).</text>
</comment>
<comment type="subcellular location">
    <subcellularLocation>
        <location evidence="5">Cell tip</location>
    </subcellularLocation>
</comment>
<dbReference type="EMBL" id="CU329670">
    <property type="protein sequence ID" value="CAA22592.1"/>
    <property type="molecule type" value="Genomic_DNA"/>
</dbReference>
<dbReference type="PIR" id="T39005">
    <property type="entry name" value="T39005"/>
</dbReference>
<dbReference type="RefSeq" id="NP_594631.1">
    <property type="nucleotide sequence ID" value="NM_001020059.2"/>
</dbReference>
<dbReference type="SMR" id="O94447"/>
<dbReference type="BioGRID" id="280088">
    <property type="interactions" value="17"/>
</dbReference>
<dbReference type="FunCoup" id="O94447">
    <property type="interactions" value="31"/>
</dbReference>
<dbReference type="STRING" id="284812.O94447"/>
<dbReference type="iPTMnet" id="O94447"/>
<dbReference type="SwissPalm" id="O94447"/>
<dbReference type="PaxDb" id="4896-SPAC637.13c.1"/>
<dbReference type="EnsemblFungi" id="SPAC637.13c.1">
    <property type="protein sequence ID" value="SPAC637.13c.1:pep"/>
    <property type="gene ID" value="SPAC637.13c"/>
</dbReference>
<dbReference type="GeneID" id="2543674"/>
<dbReference type="KEGG" id="spo:2543674"/>
<dbReference type="PomBase" id="SPAC637.13c">
    <property type="gene designation" value="slm1"/>
</dbReference>
<dbReference type="VEuPathDB" id="FungiDB:SPAC637.13c"/>
<dbReference type="eggNOG" id="ENOG502QRAF">
    <property type="taxonomic scope" value="Eukaryota"/>
</dbReference>
<dbReference type="HOGENOM" id="CLU_554501_0_0_1"/>
<dbReference type="InParanoid" id="O94447"/>
<dbReference type="OMA" id="KVGNAFH"/>
<dbReference type="PhylomeDB" id="O94447"/>
<dbReference type="PRO" id="PR:O94447"/>
<dbReference type="Proteomes" id="UP000002485">
    <property type="component" value="Chromosome I"/>
</dbReference>
<dbReference type="GO" id="GO:0051285">
    <property type="term" value="C:cell cortex of cell tip"/>
    <property type="evidence" value="ECO:0000314"/>
    <property type="project" value="PomBase"/>
</dbReference>
<dbReference type="GO" id="GO:0005737">
    <property type="term" value="C:cytoplasm"/>
    <property type="evidence" value="ECO:0000318"/>
    <property type="project" value="GO_Central"/>
</dbReference>
<dbReference type="GO" id="GO:0009898">
    <property type="term" value="C:cytoplasmic side of plasma membrane"/>
    <property type="evidence" value="ECO:0000269"/>
    <property type="project" value="PomBase"/>
</dbReference>
<dbReference type="GO" id="GO:0032126">
    <property type="term" value="C:eisosome"/>
    <property type="evidence" value="ECO:0000266"/>
    <property type="project" value="PomBase"/>
</dbReference>
<dbReference type="GO" id="GO:0070250">
    <property type="term" value="C:mating projection membrane"/>
    <property type="evidence" value="ECO:0000314"/>
    <property type="project" value="PomBase"/>
</dbReference>
<dbReference type="GO" id="GO:0005886">
    <property type="term" value="C:plasma membrane"/>
    <property type="evidence" value="ECO:0000318"/>
    <property type="project" value="GO_Central"/>
</dbReference>
<dbReference type="GO" id="GO:0035091">
    <property type="term" value="F:phosphatidylinositol binding"/>
    <property type="evidence" value="ECO:0000266"/>
    <property type="project" value="PomBase"/>
</dbReference>
<dbReference type="GO" id="GO:0030036">
    <property type="term" value="P:actin cytoskeleton organization"/>
    <property type="evidence" value="ECO:0000318"/>
    <property type="project" value="GO_Central"/>
</dbReference>
<dbReference type="GO" id="GO:0140253">
    <property type="term" value="P:cell-cell fusion"/>
    <property type="evidence" value="ECO:0000315"/>
    <property type="project" value="PomBase"/>
</dbReference>
<dbReference type="GO" id="GO:1904600">
    <property type="term" value="P:mating projection actin fusion focus assembly"/>
    <property type="evidence" value="ECO:0000315"/>
    <property type="project" value="PomBase"/>
</dbReference>
<dbReference type="CDD" id="cd13311">
    <property type="entry name" value="PH_Slm1"/>
    <property type="match status" value="1"/>
</dbReference>
<dbReference type="FunFam" id="2.30.29.30:FF:000328">
    <property type="entry name" value="Phosphatidylinositol 4,5-bisphosphate-binding protein SLM1"/>
    <property type="match status" value="1"/>
</dbReference>
<dbReference type="FunFam" id="1.20.1270.60:FF:000078">
    <property type="entry name" value="Slm1p"/>
    <property type="match status" value="1"/>
</dbReference>
<dbReference type="Gene3D" id="1.20.1270.60">
    <property type="entry name" value="Arfaptin homology (AH) domain/BAR domain"/>
    <property type="match status" value="1"/>
</dbReference>
<dbReference type="Gene3D" id="2.30.29.30">
    <property type="entry name" value="Pleckstrin-homology domain (PH domain)/Phosphotyrosine-binding domain (PTB)"/>
    <property type="match status" value="1"/>
</dbReference>
<dbReference type="InterPro" id="IPR027267">
    <property type="entry name" value="AH/BAR_dom_sf"/>
</dbReference>
<dbReference type="InterPro" id="IPR046868">
    <property type="entry name" value="BAR_4"/>
</dbReference>
<dbReference type="InterPro" id="IPR011993">
    <property type="entry name" value="PH-like_dom_sf"/>
</dbReference>
<dbReference type="InterPro" id="IPR001849">
    <property type="entry name" value="PH_domain"/>
</dbReference>
<dbReference type="InterPro" id="IPR046869">
    <property type="entry name" value="SLM1/RGC1-like_PH"/>
</dbReference>
<dbReference type="InterPro" id="IPR043453">
    <property type="entry name" value="Slm1_PH"/>
</dbReference>
<dbReference type="PANTHER" id="PTHR31941">
    <property type="entry name" value="CYTOSKELETAL SIGNALING PROTEIN SLM1"/>
    <property type="match status" value="1"/>
</dbReference>
<dbReference type="PANTHER" id="PTHR31941:SF1">
    <property type="entry name" value="CYTOSKELETAL SIGNALING PROTEIN SLM1"/>
    <property type="match status" value="1"/>
</dbReference>
<dbReference type="Pfam" id="PF20400">
    <property type="entry name" value="BAR_4"/>
    <property type="match status" value="1"/>
</dbReference>
<dbReference type="Pfam" id="PF20399">
    <property type="entry name" value="PH_20"/>
    <property type="match status" value="1"/>
</dbReference>
<dbReference type="SMART" id="SM00233">
    <property type="entry name" value="PH"/>
    <property type="match status" value="1"/>
</dbReference>
<dbReference type="SUPFAM" id="SSF103657">
    <property type="entry name" value="BAR/IMD domain-like"/>
    <property type="match status" value="1"/>
</dbReference>
<dbReference type="SUPFAM" id="SSF50729">
    <property type="entry name" value="PH domain-like"/>
    <property type="match status" value="1"/>
</dbReference>
<dbReference type="PROSITE" id="PS50003">
    <property type="entry name" value="PH_DOMAIN"/>
    <property type="match status" value="1"/>
</dbReference>
<protein>
    <recommendedName>
        <fullName>Cytoskeletal signaling protein slm1</fullName>
    </recommendedName>
</protein>
<proteinExistence type="evidence at protein level"/>
<organism>
    <name type="scientific">Schizosaccharomyces pombe (strain 972 / ATCC 24843)</name>
    <name type="common">Fission yeast</name>
    <dbReference type="NCBI Taxonomy" id="284812"/>
    <lineage>
        <taxon>Eukaryota</taxon>
        <taxon>Fungi</taxon>
        <taxon>Dikarya</taxon>
        <taxon>Ascomycota</taxon>
        <taxon>Taphrinomycotina</taxon>
        <taxon>Schizosaccharomycetes</taxon>
        <taxon>Schizosaccharomycetales</taxon>
        <taxon>Schizosaccharomycetaceae</taxon>
        <taxon>Schizosaccharomyces</taxon>
    </lineage>
</organism>
<name>SLM1_SCHPO</name>
<reference key="1">
    <citation type="journal article" date="2002" name="Nature">
        <title>The genome sequence of Schizosaccharomyces pombe.</title>
        <authorList>
            <person name="Wood V."/>
            <person name="Gwilliam R."/>
            <person name="Rajandream M.A."/>
            <person name="Lyne M.H."/>
            <person name="Lyne R."/>
            <person name="Stewart A."/>
            <person name="Sgouros J.G."/>
            <person name="Peat N."/>
            <person name="Hayles J."/>
            <person name="Baker S.G."/>
            <person name="Basham D."/>
            <person name="Bowman S."/>
            <person name="Brooks K."/>
            <person name="Brown D."/>
            <person name="Brown S."/>
            <person name="Chillingworth T."/>
            <person name="Churcher C.M."/>
            <person name="Collins M."/>
            <person name="Connor R."/>
            <person name="Cronin A."/>
            <person name="Davis P."/>
            <person name="Feltwell T."/>
            <person name="Fraser A."/>
            <person name="Gentles S."/>
            <person name="Goble A."/>
            <person name="Hamlin N."/>
            <person name="Harris D.E."/>
            <person name="Hidalgo J."/>
            <person name="Hodgson G."/>
            <person name="Holroyd S."/>
            <person name="Hornsby T."/>
            <person name="Howarth S."/>
            <person name="Huckle E.J."/>
            <person name="Hunt S."/>
            <person name="Jagels K."/>
            <person name="James K.D."/>
            <person name="Jones L."/>
            <person name="Jones M."/>
            <person name="Leather S."/>
            <person name="McDonald S."/>
            <person name="McLean J."/>
            <person name="Mooney P."/>
            <person name="Moule S."/>
            <person name="Mungall K.L."/>
            <person name="Murphy L.D."/>
            <person name="Niblett D."/>
            <person name="Odell C."/>
            <person name="Oliver K."/>
            <person name="O'Neil S."/>
            <person name="Pearson D."/>
            <person name="Quail M.A."/>
            <person name="Rabbinowitsch E."/>
            <person name="Rutherford K.M."/>
            <person name="Rutter S."/>
            <person name="Saunders D."/>
            <person name="Seeger K."/>
            <person name="Sharp S."/>
            <person name="Skelton J."/>
            <person name="Simmonds M.N."/>
            <person name="Squares R."/>
            <person name="Squares S."/>
            <person name="Stevens K."/>
            <person name="Taylor K."/>
            <person name="Taylor R.G."/>
            <person name="Tivey A."/>
            <person name="Walsh S.V."/>
            <person name="Warren T."/>
            <person name="Whitehead S."/>
            <person name="Woodward J.R."/>
            <person name="Volckaert G."/>
            <person name="Aert R."/>
            <person name="Robben J."/>
            <person name="Grymonprez B."/>
            <person name="Weltjens I."/>
            <person name="Vanstreels E."/>
            <person name="Rieger M."/>
            <person name="Schaefer M."/>
            <person name="Mueller-Auer S."/>
            <person name="Gabel C."/>
            <person name="Fuchs M."/>
            <person name="Duesterhoeft A."/>
            <person name="Fritzc C."/>
            <person name="Holzer E."/>
            <person name="Moestl D."/>
            <person name="Hilbert H."/>
            <person name="Borzym K."/>
            <person name="Langer I."/>
            <person name="Beck A."/>
            <person name="Lehrach H."/>
            <person name="Reinhardt R."/>
            <person name="Pohl T.M."/>
            <person name="Eger P."/>
            <person name="Zimmermann W."/>
            <person name="Wedler H."/>
            <person name="Wambutt R."/>
            <person name="Purnelle B."/>
            <person name="Goffeau A."/>
            <person name="Cadieu E."/>
            <person name="Dreano S."/>
            <person name="Gloux S."/>
            <person name="Lelaure V."/>
            <person name="Mottier S."/>
            <person name="Galibert F."/>
            <person name="Aves S.J."/>
            <person name="Xiang Z."/>
            <person name="Hunt C."/>
            <person name="Moore K."/>
            <person name="Hurst S.M."/>
            <person name="Lucas M."/>
            <person name="Rochet M."/>
            <person name="Gaillardin C."/>
            <person name="Tallada V.A."/>
            <person name="Garzon A."/>
            <person name="Thode G."/>
            <person name="Daga R.R."/>
            <person name="Cruzado L."/>
            <person name="Jimenez J."/>
            <person name="Sanchez M."/>
            <person name="del Rey F."/>
            <person name="Benito J."/>
            <person name="Dominguez A."/>
            <person name="Revuelta J.L."/>
            <person name="Moreno S."/>
            <person name="Armstrong J."/>
            <person name="Forsburg S.L."/>
            <person name="Cerutti L."/>
            <person name="Lowe T."/>
            <person name="McCombie W.R."/>
            <person name="Paulsen I."/>
            <person name="Potashkin J."/>
            <person name="Shpakovski G.V."/>
            <person name="Ussery D."/>
            <person name="Barrell B.G."/>
            <person name="Nurse P."/>
        </authorList>
    </citation>
    <scope>NUCLEOTIDE SEQUENCE [LARGE SCALE GENOMIC DNA]</scope>
    <source>
        <strain>972 / ATCC 24843</strain>
    </source>
</reference>
<reference key="2">
    <citation type="journal article" date="2008" name="J. Proteome Res.">
        <title>Phosphoproteome analysis of fission yeast.</title>
        <authorList>
            <person name="Wilson-Grady J.T."/>
            <person name="Villen J."/>
            <person name="Gygi S.P."/>
        </authorList>
    </citation>
    <scope>PHOSPHORYLATION [LARGE SCALE ANALYSIS] AT SER-175 AND SER-312</scope>
    <scope>IDENTIFICATION BY MASS SPECTROMETRY</scope>
</reference>
<reference key="3">
    <citation type="journal article" date="2011" name="Mol. Biol. Cell">
        <title>The filament-forming protein Pil1 assembles linear eisosomes in fission yeast.</title>
        <authorList>
            <person name="Kabeche R."/>
            <person name="Baldissard S."/>
            <person name="Hammond J."/>
            <person name="Howard L."/>
            <person name="Moseley J.B."/>
        </authorList>
    </citation>
    <scope>SUBCELLULAR LOCATION</scope>
</reference>